<feature type="chain" id="PRO_0000394858" description="Thioredoxin reductase NTRB">
    <location>
        <begin position="1"/>
        <end position="331"/>
    </location>
</feature>
<feature type="binding site" evidence="1">
    <location>
        <begin position="18"/>
        <end position="21"/>
    </location>
    <ligand>
        <name>FAD</name>
        <dbReference type="ChEBI" id="CHEBI:57692"/>
    </ligand>
</feature>
<feature type="binding site" evidence="1">
    <location>
        <begin position="39"/>
        <end position="40"/>
    </location>
    <ligand>
        <name>FAD</name>
        <dbReference type="ChEBI" id="CHEBI:57692"/>
    </ligand>
</feature>
<feature type="binding site" evidence="1">
    <location>
        <begin position="47"/>
        <end position="52"/>
    </location>
    <ligand>
        <name>FAD</name>
        <dbReference type="ChEBI" id="CHEBI:57692"/>
    </ligand>
</feature>
<feature type="binding site" evidence="1">
    <location>
        <position position="61"/>
    </location>
    <ligand>
        <name>FAD</name>
        <dbReference type="ChEBI" id="CHEBI:57692"/>
    </ligand>
</feature>
<feature type="binding site" evidence="1">
    <location>
        <position position="94"/>
    </location>
    <ligand>
        <name>FAD</name>
        <dbReference type="ChEBI" id="CHEBI:57692"/>
    </ligand>
</feature>
<feature type="binding site" evidence="1">
    <location>
        <position position="148"/>
    </location>
    <ligand>
        <name>FAD</name>
        <dbReference type="ChEBI" id="CHEBI:57692"/>
    </ligand>
</feature>
<feature type="binding site" evidence="1">
    <location>
        <position position="293"/>
    </location>
    <ligand>
        <name>FAD</name>
        <dbReference type="ChEBI" id="CHEBI:57692"/>
    </ligand>
</feature>
<feature type="binding site" evidence="1">
    <location>
        <begin position="300"/>
        <end position="302"/>
    </location>
    <ligand>
        <name>FAD</name>
        <dbReference type="ChEBI" id="CHEBI:57692"/>
    </ligand>
</feature>
<feature type="site" description="Important for activity" evidence="1">
    <location>
        <position position="169"/>
    </location>
</feature>
<feature type="site" description="Important for activity" evidence="1">
    <location>
        <position position="188"/>
    </location>
</feature>
<feature type="disulfide bond" description="Redox-active" evidence="1">
    <location>
        <begin position="145"/>
        <end position="148"/>
    </location>
</feature>
<protein>
    <recommendedName>
        <fullName>Thioredoxin reductase NTRB</fullName>
        <ecNumber>1.8.1.9</ecNumber>
    </recommendedName>
    <alternativeName>
        <fullName>NADPH-dependent thioredoxin reductase B</fullName>
        <shortName>OsNTRB</shortName>
    </alternativeName>
</protein>
<accession>Q6ZFU6</accession>
<accession>A0A0P0VNZ7</accession>
<comment type="function">
    <text evidence="1">Possesses thioredoxin-disulfide reductase activity.</text>
</comment>
<comment type="catalytic activity">
    <reaction>
        <text>[thioredoxin]-dithiol + NADP(+) = [thioredoxin]-disulfide + NADPH + H(+)</text>
        <dbReference type="Rhea" id="RHEA:20345"/>
        <dbReference type="Rhea" id="RHEA-COMP:10698"/>
        <dbReference type="Rhea" id="RHEA-COMP:10700"/>
        <dbReference type="ChEBI" id="CHEBI:15378"/>
        <dbReference type="ChEBI" id="CHEBI:29950"/>
        <dbReference type="ChEBI" id="CHEBI:50058"/>
        <dbReference type="ChEBI" id="CHEBI:57783"/>
        <dbReference type="ChEBI" id="CHEBI:58349"/>
        <dbReference type="EC" id="1.8.1.9"/>
    </reaction>
</comment>
<comment type="cofactor">
    <cofactor evidence="1">
        <name>FAD</name>
        <dbReference type="ChEBI" id="CHEBI:57692"/>
    </cofactor>
    <text evidence="1">Binds 1 FAD per subunit.</text>
</comment>
<comment type="subunit">
    <text evidence="1">Homodimer.</text>
</comment>
<comment type="miscellaneous">
    <text evidence="1">The active site is a redox-active disulfide bond.</text>
</comment>
<comment type="similarity">
    <text evidence="2">Belongs to the class-II pyridine nucleotide-disulfide oxidoreductase family.</text>
</comment>
<keyword id="KW-1015">Disulfide bond</keyword>
<keyword id="KW-0249">Electron transport</keyword>
<keyword id="KW-0274">FAD</keyword>
<keyword id="KW-0285">Flavoprotein</keyword>
<keyword id="KW-0521">NADP</keyword>
<keyword id="KW-0560">Oxidoreductase</keyword>
<keyword id="KW-0676">Redox-active center</keyword>
<keyword id="KW-1185">Reference proteome</keyword>
<keyword id="KW-0813">Transport</keyword>
<evidence type="ECO:0000250" key="1"/>
<evidence type="ECO:0000305" key="2"/>
<name>NTRB_ORYSJ</name>
<proteinExistence type="evidence at transcript level"/>
<sequence length="331" mass="34676">MEGSAGAPLRTRVCIIGSGPSAHTAAIYAARAELKPVLFEGWLANDIAAGGQLTTTTDVENFPGFPEGILGGELMDRCRAQSLRFGTSIISETVTAVDFSARPFRVASDSTTVLADAVVVATGAVARRLHFAGSDAYWNRGISACAVCDGAAPIFRNKPIAVIGGGDSAMEESNFLTKYGSHVYIIHRRNTFRASKIMQARALSNPKIQVFWDSEVVEAYGGEGGGPLAGVKVKNLVTGKISDLQVSGLFFAIGHEPATKFLGGQLELDADGYVATKPGSTHTSVKGVFAAGDVQDKKYRQAITAAGSGCMAALDAEHYLQEVGAQEGKAD</sequence>
<organism>
    <name type="scientific">Oryza sativa subsp. japonica</name>
    <name type="common">Rice</name>
    <dbReference type="NCBI Taxonomy" id="39947"/>
    <lineage>
        <taxon>Eukaryota</taxon>
        <taxon>Viridiplantae</taxon>
        <taxon>Streptophyta</taxon>
        <taxon>Embryophyta</taxon>
        <taxon>Tracheophyta</taxon>
        <taxon>Spermatophyta</taxon>
        <taxon>Magnoliopsida</taxon>
        <taxon>Liliopsida</taxon>
        <taxon>Poales</taxon>
        <taxon>Poaceae</taxon>
        <taxon>BOP clade</taxon>
        <taxon>Oryzoideae</taxon>
        <taxon>Oryzeae</taxon>
        <taxon>Oryzinae</taxon>
        <taxon>Oryza</taxon>
        <taxon>Oryza sativa</taxon>
    </lineage>
</organism>
<gene>
    <name type="primary">NTRB</name>
    <name type="ordered locus">Os02g0713400</name>
    <name type="ordered locus">LOC_Os02g48290</name>
    <name type="ORF">OJ1479_B12.9</name>
    <name type="ORF">OsJ_08126</name>
</gene>
<dbReference type="EC" id="1.8.1.9"/>
<dbReference type="EMBL" id="AP004165">
    <property type="protein sequence ID" value="BAD07786.1"/>
    <property type="molecule type" value="Genomic_DNA"/>
</dbReference>
<dbReference type="EMBL" id="AP008208">
    <property type="protein sequence ID" value="BAF09825.1"/>
    <property type="molecule type" value="Genomic_DNA"/>
</dbReference>
<dbReference type="EMBL" id="AP014958">
    <property type="protein sequence ID" value="BAS80584.1"/>
    <property type="molecule type" value="Genomic_DNA"/>
</dbReference>
<dbReference type="EMBL" id="CM000139">
    <property type="protein sequence ID" value="EEE57677.1"/>
    <property type="molecule type" value="Genomic_DNA"/>
</dbReference>
<dbReference type="EMBL" id="AK071251">
    <property type="protein sequence ID" value="BAG92394.1"/>
    <property type="molecule type" value="mRNA"/>
</dbReference>
<dbReference type="RefSeq" id="XP_015627135.1">
    <property type="nucleotide sequence ID" value="XM_015771649.1"/>
</dbReference>
<dbReference type="SMR" id="Q6ZFU6"/>
<dbReference type="FunCoup" id="Q6ZFU6">
    <property type="interactions" value="722"/>
</dbReference>
<dbReference type="STRING" id="39947.Q6ZFU6"/>
<dbReference type="PaxDb" id="39947-Q6ZFU6"/>
<dbReference type="EnsemblPlants" id="Os02t0713400-01">
    <property type="protein sequence ID" value="Os02t0713400-01"/>
    <property type="gene ID" value="Os02g0713400"/>
</dbReference>
<dbReference type="Gramene" id="Os02t0713400-01">
    <property type="protein sequence ID" value="Os02t0713400-01"/>
    <property type="gene ID" value="Os02g0713400"/>
</dbReference>
<dbReference type="KEGG" id="dosa:Os02g0713400"/>
<dbReference type="eggNOG" id="KOG0404">
    <property type="taxonomic scope" value="Eukaryota"/>
</dbReference>
<dbReference type="HOGENOM" id="CLU_031864_5_1_1"/>
<dbReference type="InParanoid" id="Q6ZFU6"/>
<dbReference type="OMA" id="GPCHVLK"/>
<dbReference type="OrthoDB" id="371245at2759"/>
<dbReference type="Proteomes" id="UP000000763">
    <property type="component" value="Chromosome 2"/>
</dbReference>
<dbReference type="Proteomes" id="UP000007752">
    <property type="component" value="Chromosome 2"/>
</dbReference>
<dbReference type="Proteomes" id="UP000059680">
    <property type="component" value="Chromosome 2"/>
</dbReference>
<dbReference type="GO" id="GO:0005737">
    <property type="term" value="C:cytoplasm"/>
    <property type="evidence" value="ECO:0007669"/>
    <property type="project" value="InterPro"/>
</dbReference>
<dbReference type="GO" id="GO:0004791">
    <property type="term" value="F:thioredoxin-disulfide reductase (NADPH) activity"/>
    <property type="evidence" value="ECO:0000318"/>
    <property type="project" value="GO_Central"/>
</dbReference>
<dbReference type="GO" id="GO:0045454">
    <property type="term" value="P:cell redox homeostasis"/>
    <property type="evidence" value="ECO:0000318"/>
    <property type="project" value="GO_Central"/>
</dbReference>
<dbReference type="GO" id="GO:0019430">
    <property type="term" value="P:removal of superoxide radicals"/>
    <property type="evidence" value="ECO:0007669"/>
    <property type="project" value="InterPro"/>
</dbReference>
<dbReference type="FunFam" id="3.50.50.60:FF:000064">
    <property type="entry name" value="Thioredoxin reductase"/>
    <property type="match status" value="1"/>
</dbReference>
<dbReference type="Gene3D" id="3.50.50.60">
    <property type="entry name" value="FAD/NAD(P)-binding domain"/>
    <property type="match status" value="2"/>
</dbReference>
<dbReference type="InterPro" id="IPR036188">
    <property type="entry name" value="FAD/NAD-bd_sf"/>
</dbReference>
<dbReference type="InterPro" id="IPR023753">
    <property type="entry name" value="FAD/NAD-binding_dom"/>
</dbReference>
<dbReference type="InterPro" id="IPR050097">
    <property type="entry name" value="Ferredoxin-NADP_redctase_2"/>
</dbReference>
<dbReference type="InterPro" id="IPR008255">
    <property type="entry name" value="Pyr_nucl-diS_OxRdtase_2_AS"/>
</dbReference>
<dbReference type="InterPro" id="IPR005982">
    <property type="entry name" value="Thioredox_Rdtase"/>
</dbReference>
<dbReference type="NCBIfam" id="TIGR01292">
    <property type="entry name" value="TRX_reduct"/>
    <property type="match status" value="1"/>
</dbReference>
<dbReference type="PANTHER" id="PTHR48105">
    <property type="entry name" value="THIOREDOXIN REDUCTASE 1-RELATED-RELATED"/>
    <property type="match status" value="1"/>
</dbReference>
<dbReference type="Pfam" id="PF07992">
    <property type="entry name" value="Pyr_redox_2"/>
    <property type="match status" value="1"/>
</dbReference>
<dbReference type="PRINTS" id="PR00368">
    <property type="entry name" value="FADPNR"/>
</dbReference>
<dbReference type="PRINTS" id="PR00469">
    <property type="entry name" value="PNDRDTASEII"/>
</dbReference>
<dbReference type="SUPFAM" id="SSF51905">
    <property type="entry name" value="FAD/NAD(P)-binding domain"/>
    <property type="match status" value="1"/>
</dbReference>
<dbReference type="PROSITE" id="PS00573">
    <property type="entry name" value="PYRIDINE_REDOX_2"/>
    <property type="match status" value="1"/>
</dbReference>
<reference key="1">
    <citation type="journal article" date="2005" name="Nature">
        <title>The map-based sequence of the rice genome.</title>
        <authorList>
            <consortium name="International rice genome sequencing project (IRGSP)"/>
        </authorList>
    </citation>
    <scope>NUCLEOTIDE SEQUENCE [LARGE SCALE GENOMIC DNA]</scope>
    <source>
        <strain>cv. Nipponbare</strain>
    </source>
</reference>
<reference key="2">
    <citation type="journal article" date="2008" name="Nucleic Acids Res.">
        <title>The rice annotation project database (RAP-DB): 2008 update.</title>
        <authorList>
            <consortium name="The rice annotation project (RAP)"/>
        </authorList>
    </citation>
    <scope>GENOME REANNOTATION</scope>
    <source>
        <strain>cv. Nipponbare</strain>
    </source>
</reference>
<reference key="3">
    <citation type="journal article" date="2013" name="Rice">
        <title>Improvement of the Oryza sativa Nipponbare reference genome using next generation sequence and optical map data.</title>
        <authorList>
            <person name="Kawahara Y."/>
            <person name="de la Bastide M."/>
            <person name="Hamilton J.P."/>
            <person name="Kanamori H."/>
            <person name="McCombie W.R."/>
            <person name="Ouyang S."/>
            <person name="Schwartz D.C."/>
            <person name="Tanaka T."/>
            <person name="Wu J."/>
            <person name="Zhou S."/>
            <person name="Childs K.L."/>
            <person name="Davidson R.M."/>
            <person name="Lin H."/>
            <person name="Quesada-Ocampo L."/>
            <person name="Vaillancourt B."/>
            <person name="Sakai H."/>
            <person name="Lee S.S."/>
            <person name="Kim J."/>
            <person name="Numa H."/>
            <person name="Itoh T."/>
            <person name="Buell C.R."/>
            <person name="Matsumoto T."/>
        </authorList>
    </citation>
    <scope>GENOME REANNOTATION</scope>
    <source>
        <strain>cv. Nipponbare</strain>
    </source>
</reference>
<reference key="4">
    <citation type="journal article" date="2005" name="PLoS Biol.">
        <title>The genomes of Oryza sativa: a history of duplications.</title>
        <authorList>
            <person name="Yu J."/>
            <person name="Wang J."/>
            <person name="Lin W."/>
            <person name="Li S."/>
            <person name="Li H."/>
            <person name="Zhou J."/>
            <person name="Ni P."/>
            <person name="Dong W."/>
            <person name="Hu S."/>
            <person name="Zeng C."/>
            <person name="Zhang J."/>
            <person name="Zhang Y."/>
            <person name="Li R."/>
            <person name="Xu Z."/>
            <person name="Li S."/>
            <person name="Li X."/>
            <person name="Zheng H."/>
            <person name="Cong L."/>
            <person name="Lin L."/>
            <person name="Yin J."/>
            <person name="Geng J."/>
            <person name="Li G."/>
            <person name="Shi J."/>
            <person name="Liu J."/>
            <person name="Lv H."/>
            <person name="Li J."/>
            <person name="Wang J."/>
            <person name="Deng Y."/>
            <person name="Ran L."/>
            <person name="Shi X."/>
            <person name="Wang X."/>
            <person name="Wu Q."/>
            <person name="Li C."/>
            <person name="Ren X."/>
            <person name="Wang J."/>
            <person name="Wang X."/>
            <person name="Li D."/>
            <person name="Liu D."/>
            <person name="Zhang X."/>
            <person name="Ji Z."/>
            <person name="Zhao W."/>
            <person name="Sun Y."/>
            <person name="Zhang Z."/>
            <person name="Bao J."/>
            <person name="Han Y."/>
            <person name="Dong L."/>
            <person name="Ji J."/>
            <person name="Chen P."/>
            <person name="Wu S."/>
            <person name="Liu J."/>
            <person name="Xiao Y."/>
            <person name="Bu D."/>
            <person name="Tan J."/>
            <person name="Yang L."/>
            <person name="Ye C."/>
            <person name="Zhang J."/>
            <person name="Xu J."/>
            <person name="Zhou Y."/>
            <person name="Yu Y."/>
            <person name="Zhang B."/>
            <person name="Zhuang S."/>
            <person name="Wei H."/>
            <person name="Liu B."/>
            <person name="Lei M."/>
            <person name="Yu H."/>
            <person name="Li Y."/>
            <person name="Xu H."/>
            <person name="Wei S."/>
            <person name="He X."/>
            <person name="Fang L."/>
            <person name="Zhang Z."/>
            <person name="Zhang Y."/>
            <person name="Huang X."/>
            <person name="Su Z."/>
            <person name="Tong W."/>
            <person name="Li J."/>
            <person name="Tong Z."/>
            <person name="Li S."/>
            <person name="Ye J."/>
            <person name="Wang L."/>
            <person name="Fang L."/>
            <person name="Lei T."/>
            <person name="Chen C.-S."/>
            <person name="Chen H.-C."/>
            <person name="Xu Z."/>
            <person name="Li H."/>
            <person name="Huang H."/>
            <person name="Zhang F."/>
            <person name="Xu H."/>
            <person name="Li N."/>
            <person name="Zhao C."/>
            <person name="Li S."/>
            <person name="Dong L."/>
            <person name="Huang Y."/>
            <person name="Li L."/>
            <person name="Xi Y."/>
            <person name="Qi Q."/>
            <person name="Li W."/>
            <person name="Zhang B."/>
            <person name="Hu W."/>
            <person name="Zhang Y."/>
            <person name="Tian X."/>
            <person name="Jiao Y."/>
            <person name="Liang X."/>
            <person name="Jin J."/>
            <person name="Gao L."/>
            <person name="Zheng W."/>
            <person name="Hao B."/>
            <person name="Liu S.-M."/>
            <person name="Wang W."/>
            <person name="Yuan L."/>
            <person name="Cao M."/>
            <person name="McDermott J."/>
            <person name="Samudrala R."/>
            <person name="Wang J."/>
            <person name="Wong G.K.-S."/>
            <person name="Yang H."/>
        </authorList>
    </citation>
    <scope>NUCLEOTIDE SEQUENCE [LARGE SCALE GENOMIC DNA]</scope>
    <source>
        <strain>cv. Nipponbare</strain>
    </source>
</reference>
<reference key="5">
    <citation type="journal article" date="2003" name="Science">
        <title>Collection, mapping, and annotation of over 28,000 cDNA clones from japonica rice.</title>
        <authorList>
            <consortium name="The rice full-length cDNA consortium"/>
        </authorList>
    </citation>
    <scope>NUCLEOTIDE SEQUENCE [LARGE SCALE MRNA]</scope>
    <source>
        <strain>cv. Nipponbare</strain>
    </source>
</reference>